<accession>Q4R747</accession>
<gene>
    <name type="primary">LRRC46</name>
    <name type="ORF">QtsA-16355</name>
</gene>
<dbReference type="EMBL" id="AB168981">
    <property type="protein sequence ID" value="BAE01077.1"/>
    <property type="molecule type" value="mRNA"/>
</dbReference>
<dbReference type="RefSeq" id="NP_001271513.1">
    <property type="nucleotide sequence ID" value="NM_001284584.1"/>
</dbReference>
<dbReference type="RefSeq" id="XP_045230853.2">
    <property type="nucleotide sequence ID" value="XM_045374918.2"/>
</dbReference>
<dbReference type="SMR" id="Q4R747"/>
<dbReference type="STRING" id="9541.ENSMFAP00000017592"/>
<dbReference type="Ensembl" id="ENSMFAT00000068134.2">
    <property type="protein sequence ID" value="ENSMFAP00000017592.1"/>
    <property type="gene ID" value="ENSMFAG00000031915.2"/>
</dbReference>
<dbReference type="GeneID" id="101865879"/>
<dbReference type="VEuPathDB" id="HostDB:ENSMFAG00000031915"/>
<dbReference type="eggNOG" id="KOG0531">
    <property type="taxonomic scope" value="Eukaryota"/>
</dbReference>
<dbReference type="GeneTree" id="ENSGT00940000161315"/>
<dbReference type="OMA" id="PRQRKET"/>
<dbReference type="Proteomes" id="UP000233100">
    <property type="component" value="Chromosome 16"/>
</dbReference>
<dbReference type="Bgee" id="ENSMFAG00000031915">
    <property type="expression patterns" value="Expressed in liver and 10 other cell types or tissues"/>
</dbReference>
<dbReference type="GO" id="GO:0097225">
    <property type="term" value="C:sperm midpiece"/>
    <property type="evidence" value="ECO:0007669"/>
    <property type="project" value="Ensembl"/>
</dbReference>
<dbReference type="GO" id="GO:0098727">
    <property type="term" value="P:maintenance of cell number"/>
    <property type="evidence" value="ECO:0007669"/>
    <property type="project" value="Ensembl"/>
</dbReference>
<dbReference type="GO" id="GO:0007338">
    <property type="term" value="P:single fertilization"/>
    <property type="evidence" value="ECO:0007669"/>
    <property type="project" value="Ensembl"/>
</dbReference>
<dbReference type="GO" id="GO:0007288">
    <property type="term" value="P:sperm axoneme assembly"/>
    <property type="evidence" value="ECO:0007669"/>
    <property type="project" value="Ensembl"/>
</dbReference>
<dbReference type="GO" id="GO:0120316">
    <property type="term" value="P:sperm flagellum assembly"/>
    <property type="evidence" value="ECO:0000250"/>
    <property type="project" value="UniProtKB"/>
</dbReference>
<dbReference type="GO" id="GO:0120317">
    <property type="term" value="P:sperm mitochondrial sheath assembly"/>
    <property type="evidence" value="ECO:0007669"/>
    <property type="project" value="Ensembl"/>
</dbReference>
<dbReference type="GO" id="GO:0007283">
    <property type="term" value="P:spermatogenesis"/>
    <property type="evidence" value="ECO:0000250"/>
    <property type="project" value="UniProtKB"/>
</dbReference>
<dbReference type="FunFam" id="3.80.10.10:FF:000932">
    <property type="entry name" value="Leucine Rich Repeat family protein"/>
    <property type="match status" value="1"/>
</dbReference>
<dbReference type="Gene3D" id="3.80.10.10">
    <property type="entry name" value="Ribonuclease Inhibitor"/>
    <property type="match status" value="1"/>
</dbReference>
<dbReference type="InterPro" id="IPR050576">
    <property type="entry name" value="Cilia_flagella_integrity"/>
</dbReference>
<dbReference type="InterPro" id="IPR001611">
    <property type="entry name" value="Leu-rich_rpt"/>
</dbReference>
<dbReference type="InterPro" id="IPR003591">
    <property type="entry name" value="Leu-rich_rpt_typical-subtyp"/>
</dbReference>
<dbReference type="InterPro" id="IPR032675">
    <property type="entry name" value="LRR_dom_sf"/>
</dbReference>
<dbReference type="PANTHER" id="PTHR45973:SF9">
    <property type="entry name" value="LEUCINE-RICH REPEAT-CONTAINING PROTEIN 46"/>
    <property type="match status" value="1"/>
</dbReference>
<dbReference type="PANTHER" id="PTHR45973">
    <property type="entry name" value="PROTEIN PHOSPHATASE 1 REGULATORY SUBUNIT SDS22-RELATED"/>
    <property type="match status" value="1"/>
</dbReference>
<dbReference type="Pfam" id="PF14580">
    <property type="entry name" value="LRR_9"/>
    <property type="match status" value="1"/>
</dbReference>
<dbReference type="SMART" id="SM00365">
    <property type="entry name" value="LRR_SD22"/>
    <property type="match status" value="3"/>
</dbReference>
<dbReference type="SMART" id="SM00369">
    <property type="entry name" value="LRR_TYP"/>
    <property type="match status" value="2"/>
</dbReference>
<dbReference type="SUPFAM" id="SSF52058">
    <property type="entry name" value="L domain-like"/>
    <property type="match status" value="1"/>
</dbReference>
<dbReference type="PROSITE" id="PS51450">
    <property type="entry name" value="LRR"/>
    <property type="match status" value="5"/>
</dbReference>
<comment type="function">
    <text evidence="1">Required for normal spermatogenesis and male fertility. Plays an important role in sperm flagellum biogenesis.</text>
</comment>
<comment type="subcellular location">
    <subcellularLocation>
        <location evidence="1">Cell projection</location>
        <location evidence="1">Cilium</location>
        <location evidence="1">Flagellum</location>
    </subcellularLocation>
</comment>
<keyword id="KW-0966">Cell projection</keyword>
<keyword id="KW-0969">Cilium</keyword>
<keyword id="KW-0175">Coiled coil</keyword>
<keyword id="KW-0221">Differentiation</keyword>
<keyword id="KW-0282">Flagellum</keyword>
<keyword id="KW-0433">Leucine-rich repeat</keyword>
<keyword id="KW-0597">Phosphoprotein</keyword>
<keyword id="KW-1185">Reference proteome</keyword>
<keyword id="KW-0677">Repeat</keyword>
<keyword id="KW-0744">Spermatogenesis</keyword>
<proteinExistence type="evidence at transcript level"/>
<name>LRC46_MACFA</name>
<protein>
    <recommendedName>
        <fullName>Leucine-rich repeat-containing protein 46</fullName>
    </recommendedName>
</protein>
<feature type="chain" id="PRO_0000223920" description="Leucine-rich repeat-containing protein 46">
    <location>
        <begin position="1"/>
        <end position="321"/>
    </location>
</feature>
<feature type="repeat" description="LRR 1">
    <location>
        <begin position="45"/>
        <end position="66"/>
    </location>
</feature>
<feature type="repeat" description="LRR 2">
    <location>
        <begin position="67"/>
        <end position="88"/>
    </location>
</feature>
<feature type="repeat" description="LRR 3">
    <location>
        <begin position="89"/>
        <end position="110"/>
    </location>
</feature>
<feature type="repeat" description="LRR 4">
    <location>
        <begin position="111"/>
        <end position="132"/>
    </location>
</feature>
<feature type="domain" description="LRRCT">
    <location>
        <begin position="142"/>
        <end position="184"/>
    </location>
</feature>
<feature type="region of interest" description="Disordered" evidence="3">
    <location>
        <begin position="235"/>
        <end position="321"/>
    </location>
</feature>
<feature type="coiled-coil region" evidence="2">
    <location>
        <begin position="198"/>
        <end position="222"/>
    </location>
</feature>
<feature type="modified residue" description="Phosphoserine" evidence="1">
    <location>
        <position position="175"/>
    </location>
</feature>
<feature type="modified residue" description="Phosphoserine" evidence="1">
    <location>
        <position position="182"/>
    </location>
</feature>
<reference key="1">
    <citation type="submission" date="2005-06" db="EMBL/GenBank/DDBJ databases">
        <title>DNA sequences of macaque genes expressed in brain or testis and its evolutionary implications.</title>
        <authorList>
            <consortium name="International consortium for macaque cDNA sequencing and analysis"/>
        </authorList>
    </citation>
    <scope>NUCLEOTIDE SEQUENCE [LARGE SCALE MRNA]</scope>
    <source>
        <tissue>Testis</tissue>
    </source>
</reference>
<organism>
    <name type="scientific">Macaca fascicularis</name>
    <name type="common">Crab-eating macaque</name>
    <name type="synonym">Cynomolgus monkey</name>
    <dbReference type="NCBI Taxonomy" id="9541"/>
    <lineage>
        <taxon>Eukaryota</taxon>
        <taxon>Metazoa</taxon>
        <taxon>Chordata</taxon>
        <taxon>Craniata</taxon>
        <taxon>Vertebrata</taxon>
        <taxon>Euteleostomi</taxon>
        <taxon>Mammalia</taxon>
        <taxon>Eutheria</taxon>
        <taxon>Euarchontoglires</taxon>
        <taxon>Primates</taxon>
        <taxon>Haplorrhini</taxon>
        <taxon>Catarrhini</taxon>
        <taxon>Cercopithecidae</taxon>
        <taxon>Cercopithecinae</taxon>
        <taxon>Macaca</taxon>
    </lineage>
</organism>
<evidence type="ECO:0000250" key="1">
    <source>
        <dbReference type="UniProtKB" id="Q9DAP0"/>
    </source>
</evidence>
<evidence type="ECO:0000255" key="2"/>
<evidence type="ECO:0000256" key="3">
    <source>
        <dbReference type="SAM" id="MobiDB-lite"/>
    </source>
</evidence>
<sequence length="321" mass="35598">MSGAKSAQGPEEGGVCITEALITKRNLTFPEDEELSEKMFHTLDELQTVRLDREGITTIRNLEGLKNLHSLYLQGNKIQQIENLACVPSLRFLSLAGNQIRQVENLLDLPCLQFLDLSENLIETLKLDEFPQSLLILNLSGNSCTNQDSYRELVIEALPLLLDLDGQPVMERWISDEEDEASSEEEFPELSGPFCSERGFLKELEQELSRHREHRQQAALTQHLLRMEMQPTLTNLPLLPGVPMAGDSSPSTTPGQGEETVPEAVSSPQASSPTKKPCSLIPRGRQNSLWGRKGVRASTVPKASVAEAPSTTKTMAKRSKK</sequence>